<protein>
    <recommendedName>
        <fullName>Putative uncharacterized protein YMR194C-A</fullName>
    </recommendedName>
</protein>
<organism>
    <name type="scientific">Saccharomyces cerevisiae (strain ATCC 204508 / S288c)</name>
    <name type="common">Baker's yeast</name>
    <dbReference type="NCBI Taxonomy" id="559292"/>
    <lineage>
        <taxon>Eukaryota</taxon>
        <taxon>Fungi</taxon>
        <taxon>Dikarya</taxon>
        <taxon>Ascomycota</taxon>
        <taxon>Saccharomycotina</taxon>
        <taxon>Saccharomycetes</taxon>
        <taxon>Saccharomycetales</taxon>
        <taxon>Saccharomycetaceae</taxon>
        <taxon>Saccharomyces</taxon>
    </lineage>
</organism>
<feature type="chain" id="PRO_0000309054" description="Putative uncharacterized protein YMR194C-A">
    <location>
        <begin position="1"/>
        <end position="74"/>
    </location>
</feature>
<comment type="caution">
    <text evidence="1">Product of a dubious gene prediction unlikely to encode a functional protein. Because of that it is not part of the S.cerevisiae S288c complete/reference proteome set.</text>
</comment>
<dbReference type="EMBL" id="Z47815">
    <property type="status" value="NOT_ANNOTATED_CDS"/>
    <property type="molecule type" value="Genomic_DNA"/>
</dbReference>
<dbReference type="STRING" id="4932.YMR194C-A"/>
<dbReference type="PaxDb" id="4932-YMR194C-A"/>
<dbReference type="EnsemblFungi" id="YMR194C-A_mRNA">
    <property type="protein sequence ID" value="YMR194C-A"/>
    <property type="gene ID" value="YMR194C-A"/>
</dbReference>
<dbReference type="AGR" id="SGD:S000007250"/>
<dbReference type="SGD" id="S000007250">
    <property type="gene designation" value="YMR194C-A"/>
</dbReference>
<dbReference type="HOGENOM" id="CLU_2706258_0_0_1"/>
<gene>
    <name type="ordered locus">YMR194C-A</name>
</gene>
<name>YM94A_YEAST</name>
<sequence length="74" mass="8537">MLPVANIWRLLHVNDVPTINFARSGRALLTSSVSETFTDITFHPWGVYESSEEGVERQNITVLFFQDIERFFSC</sequence>
<reference key="1">
    <citation type="journal article" date="1997" name="Nature">
        <title>The nucleotide sequence of Saccharomyces cerevisiae chromosome XIII.</title>
        <authorList>
            <person name="Bowman S."/>
            <person name="Churcher C.M."/>
            <person name="Badcock K."/>
            <person name="Brown D."/>
            <person name="Chillingworth T."/>
            <person name="Connor R."/>
            <person name="Dedman K."/>
            <person name="Devlin K."/>
            <person name="Gentles S."/>
            <person name="Hamlin N."/>
            <person name="Hunt S."/>
            <person name="Jagels K."/>
            <person name="Lye G."/>
            <person name="Moule S."/>
            <person name="Odell C."/>
            <person name="Pearson D."/>
            <person name="Rajandream M.A."/>
            <person name="Rice P."/>
            <person name="Skelton J."/>
            <person name="Walsh S.V."/>
            <person name="Whitehead S."/>
            <person name="Barrell B.G."/>
        </authorList>
    </citation>
    <scope>NUCLEOTIDE SEQUENCE [LARGE SCALE GENOMIC DNA]</scope>
    <source>
        <strain>ATCC 204508 / S288c</strain>
    </source>
</reference>
<reference key="2">
    <citation type="journal article" date="2014" name="G3 (Bethesda)">
        <title>The reference genome sequence of Saccharomyces cerevisiae: Then and now.</title>
        <authorList>
            <person name="Engel S.R."/>
            <person name="Dietrich F.S."/>
            <person name="Fisk D.G."/>
            <person name="Binkley G."/>
            <person name="Balakrishnan R."/>
            <person name="Costanzo M.C."/>
            <person name="Dwight S.S."/>
            <person name="Hitz B.C."/>
            <person name="Karra K."/>
            <person name="Nash R.S."/>
            <person name="Weng S."/>
            <person name="Wong E.D."/>
            <person name="Lloyd P."/>
            <person name="Skrzypek M.S."/>
            <person name="Miyasato S.R."/>
            <person name="Simison M."/>
            <person name="Cherry J.M."/>
        </authorList>
    </citation>
    <scope>GENOME REANNOTATION</scope>
    <source>
        <strain>ATCC 204508 / S288c</strain>
    </source>
</reference>
<reference key="3">
    <citation type="journal article" date="1997" name="Cell">
        <title>Characterization of the yeast transcriptome.</title>
        <authorList>
            <person name="Velculescu V.E."/>
            <person name="Zhang L."/>
            <person name="Zhou W."/>
            <person name="Vogelstein J."/>
            <person name="Basrai M.A."/>
            <person name="Bassett D.E. Jr."/>
            <person name="Hieter P."/>
            <person name="Vogelstein B."/>
            <person name="Kinzler K.W."/>
        </authorList>
    </citation>
    <scope>GENOME REANNOTATION</scope>
</reference>
<accession>P0C5Q6</accession>
<evidence type="ECO:0000305" key="1">
    <source>
    </source>
</evidence>
<proteinExistence type="uncertain"/>